<name>RABL6_HUMAN</name>
<gene>
    <name type="primary">RABL6</name>
    <name type="synonym">C9orf86</name>
    <name type="synonym">PARF</name>
</gene>
<dbReference type="EMBL" id="DQ141240">
    <property type="protein sequence ID" value="AAZ73768.1"/>
    <property type="molecule type" value="mRNA"/>
</dbReference>
<dbReference type="EMBL" id="EF156752">
    <property type="protein sequence ID" value="ABO84837.1"/>
    <property type="molecule type" value="mRNA"/>
</dbReference>
<dbReference type="EMBL" id="EF156753">
    <property type="protein sequence ID" value="ABO84838.1"/>
    <property type="molecule type" value="mRNA"/>
</dbReference>
<dbReference type="EMBL" id="GQ169126">
    <property type="protein sequence ID" value="ACS45171.1"/>
    <property type="molecule type" value="mRNA"/>
</dbReference>
<dbReference type="EMBL" id="GQ169127">
    <property type="protein sequence ID" value="ACS45172.1"/>
    <property type="molecule type" value="mRNA"/>
</dbReference>
<dbReference type="EMBL" id="AL355987">
    <property type="status" value="NOT_ANNOTATED_CDS"/>
    <property type="molecule type" value="Genomic_DNA"/>
</dbReference>
<dbReference type="EMBL" id="DQ099383">
    <property type="protein sequence ID" value="AAZ13759.1"/>
    <property type="molecule type" value="mRNA"/>
</dbReference>
<dbReference type="EMBL" id="BC002945">
    <property type="protein sequence ID" value="AAH02945.2"/>
    <property type="status" value="ALT_INIT"/>
    <property type="molecule type" value="mRNA"/>
</dbReference>
<dbReference type="EMBL" id="BC021095">
    <property type="protein sequence ID" value="AAH21095.2"/>
    <property type="status" value="ALT_INIT"/>
    <property type="molecule type" value="mRNA"/>
</dbReference>
<dbReference type="EMBL" id="BC035786">
    <property type="protein sequence ID" value="AAH35786.1"/>
    <property type="status" value="ALT_INIT"/>
    <property type="molecule type" value="mRNA"/>
</dbReference>
<dbReference type="EMBL" id="AK023107">
    <property type="protein sequence ID" value="BAB14408.1"/>
    <property type="status" value="ALT_INIT"/>
    <property type="molecule type" value="mRNA"/>
</dbReference>
<dbReference type="EMBL" id="AK027586">
    <property type="protein sequence ID" value="BAB55213.1"/>
    <property type="status" value="ALT_INIT"/>
    <property type="molecule type" value="mRNA"/>
</dbReference>
<dbReference type="EMBL" id="AL713707">
    <property type="protein sequence ID" value="CAD28504.1"/>
    <property type="molecule type" value="mRNA"/>
</dbReference>
<dbReference type="CCDS" id="CCDS48058.1">
    <molecule id="Q3YEC7-1"/>
</dbReference>
<dbReference type="CCDS" id="CCDS55352.1">
    <molecule id="Q3YEC7-2"/>
</dbReference>
<dbReference type="CCDS" id="CCDS55353.1">
    <molecule id="Q3YEC7-6"/>
</dbReference>
<dbReference type="RefSeq" id="NP_001167459.1">
    <molecule id="Q3YEC7-2"/>
    <property type="nucleotide sequence ID" value="NM_001173988.2"/>
</dbReference>
<dbReference type="RefSeq" id="NP_001167460.1">
    <molecule id="Q3YEC7-6"/>
    <property type="nucleotide sequence ID" value="NM_001173989.4"/>
</dbReference>
<dbReference type="RefSeq" id="NP_078994.3">
    <molecule id="Q3YEC7-1"/>
    <property type="nucleotide sequence ID" value="NM_024718.4"/>
</dbReference>
<dbReference type="SMR" id="Q3YEC7"/>
<dbReference type="BioGRID" id="120812">
    <property type="interactions" value="143"/>
</dbReference>
<dbReference type="FunCoup" id="Q3YEC7">
    <property type="interactions" value="2957"/>
</dbReference>
<dbReference type="IntAct" id="Q3YEC7">
    <property type="interactions" value="68"/>
</dbReference>
<dbReference type="MINT" id="Q3YEC7"/>
<dbReference type="STRING" id="9606.ENSP00000360727"/>
<dbReference type="GlyGen" id="Q3YEC7">
    <property type="glycosylation" value="5 sites, 1 N-linked glycan (1 site), 1 O-linked glycan (4 sites)"/>
</dbReference>
<dbReference type="iPTMnet" id="Q3YEC7"/>
<dbReference type="PhosphoSitePlus" id="Q3YEC7"/>
<dbReference type="BioMuta" id="RABL6"/>
<dbReference type="DMDM" id="125957950"/>
<dbReference type="jPOST" id="Q3YEC7"/>
<dbReference type="MassIVE" id="Q3YEC7"/>
<dbReference type="PaxDb" id="9606-ENSP00000360727"/>
<dbReference type="PeptideAtlas" id="Q3YEC7"/>
<dbReference type="Pumba" id="Q3YEC7"/>
<dbReference type="Antibodypedia" id="32247">
    <property type="antibodies" value="107 antibodies from 21 providers"/>
</dbReference>
<dbReference type="DNASU" id="55684"/>
<dbReference type="Ensembl" id="ENST00000311502.12">
    <molecule id="Q3YEC7-1"/>
    <property type="protein sequence ID" value="ENSP00000311134.7"/>
    <property type="gene ID" value="ENSG00000196642.19"/>
</dbReference>
<dbReference type="Ensembl" id="ENST00000357466.6">
    <molecule id="Q3YEC7-3"/>
    <property type="protein sequence ID" value="ENSP00000350056.2"/>
    <property type="gene ID" value="ENSG00000196642.19"/>
</dbReference>
<dbReference type="Ensembl" id="ENST00000371663.10">
    <molecule id="Q3YEC7-2"/>
    <property type="protein sequence ID" value="ENSP00000360727.6"/>
    <property type="gene ID" value="ENSG00000196642.19"/>
</dbReference>
<dbReference type="Ensembl" id="ENST00000371671.9">
    <molecule id="Q3YEC7-6"/>
    <property type="protein sequence ID" value="ENSP00000360736.4"/>
    <property type="gene ID" value="ENSG00000196642.19"/>
</dbReference>
<dbReference type="GeneID" id="55684"/>
<dbReference type="KEGG" id="hsa:55684"/>
<dbReference type="MANE-Select" id="ENST00000311502.12">
    <property type="protein sequence ID" value="ENSP00000311134.7"/>
    <property type="RefSeq nucleotide sequence ID" value="NM_024718.5"/>
    <property type="RefSeq protein sequence ID" value="NP_078994.3"/>
</dbReference>
<dbReference type="UCSC" id="uc004cjh.4">
    <molecule id="Q3YEC7-1"/>
    <property type="organism name" value="human"/>
</dbReference>
<dbReference type="AGR" id="HGNC:24703"/>
<dbReference type="CTD" id="55684"/>
<dbReference type="DisGeNET" id="55684"/>
<dbReference type="GeneCards" id="RABL6"/>
<dbReference type="HGNC" id="HGNC:24703">
    <property type="gene designation" value="RABL6"/>
</dbReference>
<dbReference type="HPA" id="ENSG00000196642">
    <property type="expression patterns" value="Low tissue specificity"/>
</dbReference>
<dbReference type="MIM" id="610615">
    <property type="type" value="gene"/>
</dbReference>
<dbReference type="neXtProt" id="NX_Q3YEC7"/>
<dbReference type="OpenTargets" id="ENSG00000196642"/>
<dbReference type="PharmGKB" id="PA134868176"/>
<dbReference type="VEuPathDB" id="HostDB:ENSG00000196642"/>
<dbReference type="eggNOG" id="KOG0084">
    <property type="taxonomic scope" value="Eukaryota"/>
</dbReference>
<dbReference type="GeneTree" id="ENSGT00390000016002"/>
<dbReference type="HOGENOM" id="CLU_012780_0_0_1"/>
<dbReference type="InParanoid" id="Q3YEC7"/>
<dbReference type="OMA" id="DHVTYFI"/>
<dbReference type="OrthoDB" id="207081at2759"/>
<dbReference type="PAN-GO" id="Q3YEC7">
    <property type="GO annotations" value="3 GO annotations based on evolutionary models"/>
</dbReference>
<dbReference type="PhylomeDB" id="Q3YEC7"/>
<dbReference type="TreeFam" id="TF313974"/>
<dbReference type="PathwayCommons" id="Q3YEC7"/>
<dbReference type="SignaLink" id="Q3YEC7"/>
<dbReference type="BioGRID-ORCS" id="55684">
    <property type="hits" value="30 hits in 1164 CRISPR screens"/>
</dbReference>
<dbReference type="ChiTaRS" id="RABL6">
    <property type="organism name" value="human"/>
</dbReference>
<dbReference type="GeneWiki" id="C9orf86"/>
<dbReference type="GenomeRNAi" id="55684"/>
<dbReference type="Pharos" id="Q3YEC7">
    <property type="development level" value="Tbio"/>
</dbReference>
<dbReference type="PRO" id="PR:Q3YEC7"/>
<dbReference type="Proteomes" id="UP000005640">
    <property type="component" value="Chromosome 9"/>
</dbReference>
<dbReference type="RNAct" id="Q3YEC7">
    <property type="molecule type" value="protein"/>
</dbReference>
<dbReference type="Bgee" id="ENSG00000196642">
    <property type="expression patterns" value="Expressed in right hemisphere of cerebellum and 168 other cell types or tissues"/>
</dbReference>
<dbReference type="ExpressionAtlas" id="Q3YEC7">
    <property type="expression patterns" value="baseline and differential"/>
</dbReference>
<dbReference type="GO" id="GO:0034451">
    <property type="term" value="C:centriolar satellite"/>
    <property type="evidence" value="ECO:0000314"/>
    <property type="project" value="HPA"/>
</dbReference>
<dbReference type="GO" id="GO:0005813">
    <property type="term" value="C:centrosome"/>
    <property type="evidence" value="ECO:0000314"/>
    <property type="project" value="HPA"/>
</dbReference>
<dbReference type="GO" id="GO:0036064">
    <property type="term" value="C:ciliary basal body"/>
    <property type="evidence" value="ECO:0000314"/>
    <property type="project" value="HPA"/>
</dbReference>
<dbReference type="GO" id="GO:0005737">
    <property type="term" value="C:cytoplasm"/>
    <property type="evidence" value="ECO:0000314"/>
    <property type="project" value="MGI"/>
</dbReference>
<dbReference type="GO" id="GO:0005829">
    <property type="term" value="C:cytosol"/>
    <property type="evidence" value="ECO:0000314"/>
    <property type="project" value="HPA"/>
</dbReference>
<dbReference type="GO" id="GO:0005634">
    <property type="term" value="C:nucleus"/>
    <property type="evidence" value="ECO:0000314"/>
    <property type="project" value="MGI"/>
</dbReference>
<dbReference type="GO" id="GO:0005525">
    <property type="term" value="F:GTP binding"/>
    <property type="evidence" value="ECO:0000314"/>
    <property type="project" value="MGI"/>
</dbReference>
<dbReference type="FunFam" id="3.40.50.300:FF:000781">
    <property type="entry name" value="RAB, member RAS oncogene family like 6"/>
    <property type="match status" value="1"/>
</dbReference>
<dbReference type="Gene3D" id="3.40.50.300">
    <property type="entry name" value="P-loop containing nucleotide triphosphate hydrolases"/>
    <property type="match status" value="1"/>
</dbReference>
<dbReference type="InterPro" id="IPR027417">
    <property type="entry name" value="P-loop_NTPase"/>
</dbReference>
<dbReference type="InterPro" id="IPR040385">
    <property type="entry name" value="RABL6"/>
</dbReference>
<dbReference type="PANTHER" id="PTHR14932:SF1">
    <property type="entry name" value="RAB-LIKE PROTEIN 6"/>
    <property type="match status" value="1"/>
</dbReference>
<dbReference type="PANTHER" id="PTHR14932">
    <property type="entry name" value="RAS GTPASE-RELATED"/>
    <property type="match status" value="1"/>
</dbReference>
<dbReference type="Pfam" id="PF08477">
    <property type="entry name" value="Roc"/>
    <property type="match status" value="1"/>
</dbReference>
<dbReference type="PRINTS" id="PR00449">
    <property type="entry name" value="RASTRNSFRMNG"/>
</dbReference>
<dbReference type="SMART" id="SM00175">
    <property type="entry name" value="RAB"/>
    <property type="match status" value="1"/>
</dbReference>
<dbReference type="SUPFAM" id="SSF52540">
    <property type="entry name" value="P-loop containing nucleoside triphosphate hydrolases"/>
    <property type="match status" value="1"/>
</dbReference>
<dbReference type="PROSITE" id="PS51419">
    <property type="entry name" value="RAB"/>
    <property type="match status" value="1"/>
</dbReference>
<organism>
    <name type="scientific">Homo sapiens</name>
    <name type="common">Human</name>
    <dbReference type="NCBI Taxonomy" id="9606"/>
    <lineage>
        <taxon>Eukaryota</taxon>
        <taxon>Metazoa</taxon>
        <taxon>Chordata</taxon>
        <taxon>Craniata</taxon>
        <taxon>Vertebrata</taxon>
        <taxon>Euteleostomi</taxon>
        <taxon>Mammalia</taxon>
        <taxon>Eutheria</taxon>
        <taxon>Euarchontoglires</taxon>
        <taxon>Primates</taxon>
        <taxon>Haplorrhini</taxon>
        <taxon>Catarrhini</taxon>
        <taxon>Hominidae</taxon>
        <taxon>Homo</taxon>
    </lineage>
</organism>
<sequence length="729" mass="79549">MFSALKKLVGSDQAPGRDKNIPAGLQSMNQALQRRFAKGVQYNMKIVIRGDRNTGKTALWHRLQGRPFVEEYIPTQEIQVTSIHWSYKTTDDIVKVEVWDVVDKGKCKKRGDGLKMENDPQEAESEMALDAEFLDVYKNCNGVVMMFDITKQWTFNYILRELPKVPTHVPVCVLGNYRDMGEHRVILPDDVRDFIDNLDRPPGSSYFRYAESSMKNSFGLKYLHKFFNIPFLQLQRETLLRQLETNQLDMDATLEELSVQQETEDQNYGIFLEMMEARSRGHASPLAANGQSPSPGSQSPVVPAGAVSTGSSSPGTPQPAPQLPLNAAPPSSVPPVPPSEALPPPACPSAPAPRRSIISRLFGTSPATEAAPPPPEPVPAAEGPATVQSVEDFVPDDRLDRSFLEDTTPARDEKKVGAKAAQQDSDSDGEALGGNPMVAGFQDDVDLEDQPRGSPPLPAGPVPSQDITLSSEEEAEVAAPTKGPAPAPQQCSEPETKWSSIPASKPRRGTAPTRTAAPPWPGGVSVRTGPEKRSSTRPPAEMEPGKGEQASSSESDPEGPIAAQMLSFVMDDPDFESEGSDTQRRADDFPVRDDPSDVTDEDEGPAEPPPPPKLPLPAFRLKNDSDLFGLGLEEAGPKESSEEGKEGKTPSKEKKKKKKKGKEEEEKAAKKKSKHKKSKDKEEGKEERRRRQQRPPRSRERTAADELEAFLGGGAPGGRHPGGGDYEEL</sequence>
<protein>
    <recommendedName>
        <fullName>Rab-like protein 6</fullName>
    </recommendedName>
    <alternativeName>
        <fullName>GTP-binding protein Parf</fullName>
    </alternativeName>
    <alternativeName>
        <fullName>Partner of ARF</fullName>
    </alternativeName>
    <alternativeName>
        <fullName>Rab-like protein 1</fullName>
        <shortName>RBEL1</shortName>
    </alternativeName>
</protein>
<reference key="1">
    <citation type="journal article" date="2006" name="Cell Cycle">
        <title>Identification of novel ARF binding proteins by two-hybrid screening.</title>
        <authorList>
            <person name="Tompkins V."/>
            <person name="Hagen J."/>
            <person name="Zediak V.P."/>
            <person name="Quelle D.E."/>
        </authorList>
    </citation>
    <scope>NUCLEOTIDE SEQUENCE [MRNA] (ISOFORM 1)</scope>
    <scope>VARIANT GLN-382</scope>
    <scope>FUNCTION</scope>
    <scope>SUBCELLULAR LOCATION</scope>
    <scope>INTERACTION WITH CDKN2A</scope>
</reference>
<reference key="2">
    <citation type="journal article" date="2007" name="J. Biol. Chem.">
        <title>RBEL1 is a novel gene that encodes a nucleocytoplasmic Ras superfamily GTP-binding protein and is overexpressed in breast cancer.</title>
        <authorList>
            <person name="Montalbano J."/>
            <person name="Jin W."/>
            <person name="Sheikh M.S."/>
            <person name="Huang Y."/>
        </authorList>
    </citation>
    <scope>NUCLEOTIDE SEQUENCE [MRNA] (ISOFORMS 1 AND 3)</scope>
    <scope>ALTERNATIVE SPLICING</scope>
    <scope>GLYCOSYLATION</scope>
    <scope>SUBCELLULAR LOCATION</scope>
</reference>
<reference key="3">
    <citation type="journal article" date="2009" name="J. Biol. Chem.">
        <title>Identification and characterization of RBEL1 subfamily of GTPases in the Ras superfamily involved in cell growth regulation.</title>
        <authorList>
            <person name="Montalbano J."/>
            <person name="Lui K."/>
            <person name="Sheikh M.S."/>
            <person name="Huang Y."/>
        </authorList>
    </citation>
    <scope>NUCLEOTIDE SEQUENCE [MRNA] (ISOFORMS 4 AND 6)</scope>
    <scope>SUBCELLULAR LOCATION</scope>
</reference>
<reference key="4">
    <citation type="journal article" date="2004" name="Nature">
        <title>DNA sequence and analysis of human chromosome 9.</title>
        <authorList>
            <person name="Humphray S.J."/>
            <person name="Oliver K."/>
            <person name="Hunt A.R."/>
            <person name="Plumb R.W."/>
            <person name="Loveland J.E."/>
            <person name="Howe K.L."/>
            <person name="Andrews T.D."/>
            <person name="Searle S."/>
            <person name="Hunt S.E."/>
            <person name="Scott C.E."/>
            <person name="Jones M.C."/>
            <person name="Ainscough R."/>
            <person name="Almeida J.P."/>
            <person name="Ambrose K.D."/>
            <person name="Ashwell R.I.S."/>
            <person name="Babbage A.K."/>
            <person name="Babbage S."/>
            <person name="Bagguley C.L."/>
            <person name="Bailey J."/>
            <person name="Banerjee R."/>
            <person name="Barker D.J."/>
            <person name="Barlow K.F."/>
            <person name="Bates K."/>
            <person name="Beasley H."/>
            <person name="Beasley O."/>
            <person name="Bird C.P."/>
            <person name="Bray-Allen S."/>
            <person name="Brown A.J."/>
            <person name="Brown J.Y."/>
            <person name="Burford D."/>
            <person name="Burrill W."/>
            <person name="Burton J."/>
            <person name="Carder C."/>
            <person name="Carter N.P."/>
            <person name="Chapman J.C."/>
            <person name="Chen Y."/>
            <person name="Clarke G."/>
            <person name="Clark S.Y."/>
            <person name="Clee C.M."/>
            <person name="Clegg S."/>
            <person name="Collier R.E."/>
            <person name="Corby N."/>
            <person name="Crosier M."/>
            <person name="Cummings A.T."/>
            <person name="Davies J."/>
            <person name="Dhami P."/>
            <person name="Dunn M."/>
            <person name="Dutta I."/>
            <person name="Dyer L.W."/>
            <person name="Earthrowl M.E."/>
            <person name="Faulkner L."/>
            <person name="Fleming C.J."/>
            <person name="Frankish A."/>
            <person name="Frankland J.A."/>
            <person name="French L."/>
            <person name="Fricker D.G."/>
            <person name="Garner P."/>
            <person name="Garnett J."/>
            <person name="Ghori J."/>
            <person name="Gilbert J.G.R."/>
            <person name="Glison C."/>
            <person name="Grafham D.V."/>
            <person name="Gribble S."/>
            <person name="Griffiths C."/>
            <person name="Griffiths-Jones S."/>
            <person name="Grocock R."/>
            <person name="Guy J."/>
            <person name="Hall R.E."/>
            <person name="Hammond S."/>
            <person name="Harley J.L."/>
            <person name="Harrison E.S.I."/>
            <person name="Hart E.A."/>
            <person name="Heath P.D."/>
            <person name="Henderson C.D."/>
            <person name="Hopkins B.L."/>
            <person name="Howard P.J."/>
            <person name="Howden P.J."/>
            <person name="Huckle E."/>
            <person name="Johnson C."/>
            <person name="Johnson D."/>
            <person name="Joy A.A."/>
            <person name="Kay M."/>
            <person name="Keenan S."/>
            <person name="Kershaw J.K."/>
            <person name="Kimberley A.M."/>
            <person name="King A."/>
            <person name="Knights A."/>
            <person name="Laird G.K."/>
            <person name="Langford C."/>
            <person name="Lawlor S."/>
            <person name="Leongamornlert D.A."/>
            <person name="Leversha M."/>
            <person name="Lloyd C."/>
            <person name="Lloyd D.M."/>
            <person name="Lovell J."/>
            <person name="Martin S."/>
            <person name="Mashreghi-Mohammadi M."/>
            <person name="Matthews L."/>
            <person name="McLaren S."/>
            <person name="McLay K.E."/>
            <person name="McMurray A."/>
            <person name="Milne S."/>
            <person name="Nickerson T."/>
            <person name="Nisbett J."/>
            <person name="Nordsiek G."/>
            <person name="Pearce A.V."/>
            <person name="Peck A.I."/>
            <person name="Porter K.M."/>
            <person name="Pandian R."/>
            <person name="Pelan S."/>
            <person name="Phillimore B."/>
            <person name="Povey S."/>
            <person name="Ramsey Y."/>
            <person name="Rand V."/>
            <person name="Scharfe M."/>
            <person name="Sehra H.K."/>
            <person name="Shownkeen R."/>
            <person name="Sims S.K."/>
            <person name="Skuce C.D."/>
            <person name="Smith M."/>
            <person name="Steward C.A."/>
            <person name="Swarbreck D."/>
            <person name="Sycamore N."/>
            <person name="Tester J."/>
            <person name="Thorpe A."/>
            <person name="Tracey A."/>
            <person name="Tromans A."/>
            <person name="Thomas D.W."/>
            <person name="Wall M."/>
            <person name="Wallis J.M."/>
            <person name="West A.P."/>
            <person name="Whitehead S.L."/>
            <person name="Willey D.L."/>
            <person name="Williams S.A."/>
            <person name="Wilming L."/>
            <person name="Wray P.W."/>
            <person name="Young L."/>
            <person name="Ashurst J.L."/>
            <person name="Coulson A."/>
            <person name="Blocker H."/>
            <person name="Durbin R.M."/>
            <person name="Sulston J.E."/>
            <person name="Hubbard T."/>
            <person name="Jackson M.J."/>
            <person name="Bentley D.R."/>
            <person name="Beck S."/>
            <person name="Rogers J."/>
            <person name="Dunham I."/>
        </authorList>
    </citation>
    <scope>NUCLEOTIDE SEQUENCE [LARGE SCALE GENOMIC DNA]</scope>
</reference>
<reference key="5">
    <citation type="submission" date="2005-06" db="EMBL/GenBank/DDBJ databases">
        <authorList>
            <person name="Lin L."/>
            <person name="Nong W."/>
            <person name="Li H."/>
            <person name="Ke R."/>
            <person name="Shen C."/>
            <person name="Zhong G."/>
            <person name="Zheng Z."/>
            <person name="Liang M."/>
            <person name="Wen S."/>
            <person name="Zhou G."/>
            <person name="Yang S."/>
        </authorList>
    </citation>
    <scope>NUCLEOTIDE SEQUENCE [LARGE SCALE MRNA]</scope>
    <scope>VARIANT GLN-382</scope>
</reference>
<reference key="6">
    <citation type="journal article" date="2004" name="Genome Res.">
        <title>The status, quality, and expansion of the NIH full-length cDNA project: the Mammalian Gene Collection (MGC).</title>
        <authorList>
            <consortium name="The MGC Project Team"/>
        </authorList>
    </citation>
    <scope>NUCLEOTIDE SEQUENCE [LARGE SCALE MRNA] (ISOFORMS 1; 2 AND 3)</scope>
    <scope>VARIANT GLN-382</scope>
    <source>
        <tissue>Brain</tissue>
        <tissue>Kidney</tissue>
    </source>
</reference>
<reference key="7">
    <citation type="journal article" date="2004" name="Nat. Genet.">
        <title>Complete sequencing and characterization of 21,243 full-length human cDNAs.</title>
        <authorList>
            <person name="Ota T."/>
            <person name="Suzuki Y."/>
            <person name="Nishikawa T."/>
            <person name="Otsuki T."/>
            <person name="Sugiyama T."/>
            <person name="Irie R."/>
            <person name="Wakamatsu A."/>
            <person name="Hayashi K."/>
            <person name="Sato H."/>
            <person name="Nagai K."/>
            <person name="Kimura K."/>
            <person name="Makita H."/>
            <person name="Sekine M."/>
            <person name="Obayashi M."/>
            <person name="Nishi T."/>
            <person name="Shibahara T."/>
            <person name="Tanaka T."/>
            <person name="Ishii S."/>
            <person name="Yamamoto J."/>
            <person name="Saito K."/>
            <person name="Kawai Y."/>
            <person name="Isono Y."/>
            <person name="Nakamura Y."/>
            <person name="Nagahari K."/>
            <person name="Murakami K."/>
            <person name="Yasuda T."/>
            <person name="Iwayanagi T."/>
            <person name="Wagatsuma M."/>
            <person name="Shiratori A."/>
            <person name="Sudo H."/>
            <person name="Hosoiri T."/>
            <person name="Kaku Y."/>
            <person name="Kodaira H."/>
            <person name="Kondo H."/>
            <person name="Sugawara M."/>
            <person name="Takahashi M."/>
            <person name="Kanda K."/>
            <person name="Yokoi T."/>
            <person name="Furuya T."/>
            <person name="Kikkawa E."/>
            <person name="Omura Y."/>
            <person name="Abe K."/>
            <person name="Kamihara K."/>
            <person name="Katsuta N."/>
            <person name="Sato K."/>
            <person name="Tanikawa M."/>
            <person name="Yamazaki M."/>
            <person name="Ninomiya K."/>
            <person name="Ishibashi T."/>
            <person name="Yamashita H."/>
            <person name="Murakawa K."/>
            <person name="Fujimori K."/>
            <person name="Tanai H."/>
            <person name="Kimata M."/>
            <person name="Watanabe M."/>
            <person name="Hiraoka S."/>
            <person name="Chiba Y."/>
            <person name="Ishida S."/>
            <person name="Ono Y."/>
            <person name="Takiguchi S."/>
            <person name="Watanabe S."/>
            <person name="Yosida M."/>
            <person name="Hotuta T."/>
            <person name="Kusano J."/>
            <person name="Kanehori K."/>
            <person name="Takahashi-Fujii A."/>
            <person name="Hara H."/>
            <person name="Tanase T.-O."/>
            <person name="Nomura Y."/>
            <person name="Togiya S."/>
            <person name="Komai F."/>
            <person name="Hara R."/>
            <person name="Takeuchi K."/>
            <person name="Arita M."/>
            <person name="Imose N."/>
            <person name="Musashino K."/>
            <person name="Yuuki H."/>
            <person name="Oshima A."/>
            <person name="Sasaki N."/>
            <person name="Aotsuka S."/>
            <person name="Yoshikawa Y."/>
            <person name="Matsunawa H."/>
            <person name="Ichihara T."/>
            <person name="Shiohata N."/>
            <person name="Sano S."/>
            <person name="Moriya S."/>
            <person name="Momiyama H."/>
            <person name="Satoh N."/>
            <person name="Takami S."/>
            <person name="Terashima Y."/>
            <person name="Suzuki O."/>
            <person name="Nakagawa S."/>
            <person name="Senoh A."/>
            <person name="Mizoguchi H."/>
            <person name="Goto Y."/>
            <person name="Shimizu F."/>
            <person name="Wakebe H."/>
            <person name="Hishigaki H."/>
            <person name="Watanabe T."/>
            <person name="Sugiyama A."/>
            <person name="Takemoto M."/>
            <person name="Kawakami B."/>
            <person name="Yamazaki M."/>
            <person name="Watanabe K."/>
            <person name="Kumagai A."/>
            <person name="Itakura S."/>
            <person name="Fukuzumi Y."/>
            <person name="Fujimori Y."/>
            <person name="Komiyama M."/>
            <person name="Tashiro H."/>
            <person name="Tanigami A."/>
            <person name="Fujiwara T."/>
            <person name="Ono T."/>
            <person name="Yamada K."/>
            <person name="Fujii Y."/>
            <person name="Ozaki K."/>
            <person name="Hirao M."/>
            <person name="Ohmori Y."/>
            <person name="Kawabata A."/>
            <person name="Hikiji T."/>
            <person name="Kobatake N."/>
            <person name="Inagaki H."/>
            <person name="Ikema Y."/>
            <person name="Okamoto S."/>
            <person name="Okitani R."/>
            <person name="Kawakami T."/>
            <person name="Noguchi S."/>
            <person name="Itoh T."/>
            <person name="Shigeta K."/>
            <person name="Senba T."/>
            <person name="Matsumura K."/>
            <person name="Nakajima Y."/>
            <person name="Mizuno T."/>
            <person name="Morinaga M."/>
            <person name="Sasaki M."/>
            <person name="Togashi T."/>
            <person name="Oyama M."/>
            <person name="Hata H."/>
            <person name="Watanabe M."/>
            <person name="Komatsu T."/>
            <person name="Mizushima-Sugano J."/>
            <person name="Satoh T."/>
            <person name="Shirai Y."/>
            <person name="Takahashi Y."/>
            <person name="Nakagawa K."/>
            <person name="Okumura K."/>
            <person name="Nagase T."/>
            <person name="Nomura N."/>
            <person name="Kikuchi H."/>
            <person name="Masuho Y."/>
            <person name="Yamashita R."/>
            <person name="Nakai K."/>
            <person name="Yada T."/>
            <person name="Nakamura Y."/>
            <person name="Ohara O."/>
            <person name="Isogai T."/>
            <person name="Sugano S."/>
        </authorList>
    </citation>
    <scope>NUCLEOTIDE SEQUENCE [LARGE SCALE MRNA] OF 45-729 (ISOFORM 5)</scope>
    <scope>NUCLEOTIDE SEQUENCE [LARGE SCALE MRNA] OF 103-729 (ISOFORM 1)</scope>
    <scope>VARIANT GLN-382</scope>
</reference>
<reference key="8">
    <citation type="journal article" date="2007" name="BMC Genomics">
        <title>The full-ORF clone resource of the German cDNA consortium.</title>
        <authorList>
            <person name="Bechtel S."/>
            <person name="Rosenfelder H."/>
            <person name="Duda A."/>
            <person name="Schmidt C.P."/>
            <person name="Ernst U."/>
            <person name="Wellenreuther R."/>
            <person name="Mehrle A."/>
            <person name="Schuster C."/>
            <person name="Bahr A."/>
            <person name="Bloecker H."/>
            <person name="Heubner D."/>
            <person name="Hoerlein A."/>
            <person name="Michel G."/>
            <person name="Wedler H."/>
            <person name="Koehrer K."/>
            <person name="Ottenwaelder B."/>
            <person name="Poustka A."/>
            <person name="Wiemann S."/>
            <person name="Schupp I."/>
        </authorList>
    </citation>
    <scope>NUCLEOTIDE SEQUENCE [LARGE SCALE MRNA] OF 251-719</scope>
    <source>
        <tissue>Brain</tissue>
    </source>
</reference>
<reference key="9">
    <citation type="journal article" date="2006" name="Cell">
        <title>Global, in vivo, and site-specific phosphorylation dynamics in signaling networks.</title>
        <authorList>
            <person name="Olsen J.V."/>
            <person name="Blagoev B."/>
            <person name="Gnad F."/>
            <person name="Macek B."/>
            <person name="Kumar C."/>
            <person name="Mortensen P."/>
            <person name="Mann M."/>
        </authorList>
    </citation>
    <scope>PHOSPHORYLATION [LARGE SCALE ANALYSIS] AT SER-577; SER-596 AND THR-599</scope>
    <scope>IDENTIFICATION BY MASS SPECTROMETRY [LARGE SCALE ANALYSIS]</scope>
    <source>
        <tissue>Cervix carcinoma</tissue>
    </source>
</reference>
<reference key="10">
    <citation type="journal article" date="2008" name="J. Proteome Res.">
        <title>Combining protein-based IMAC, peptide-based IMAC, and MudPIT for efficient phosphoproteomic analysis.</title>
        <authorList>
            <person name="Cantin G.T."/>
            <person name="Yi W."/>
            <person name="Lu B."/>
            <person name="Park S.K."/>
            <person name="Xu T."/>
            <person name="Lee J.-D."/>
            <person name="Yates J.R. III"/>
        </authorList>
    </citation>
    <scope>PHOSPHORYLATION [LARGE SCALE ANALYSIS] AT SER-402</scope>
    <scope>IDENTIFICATION BY MASS SPECTROMETRY [LARGE SCALE ANALYSIS]</scope>
    <source>
        <tissue>Cervix carcinoma</tissue>
    </source>
</reference>
<reference key="11">
    <citation type="journal article" date="2009" name="Anal. Chem.">
        <title>Lys-N and trypsin cover complementary parts of the phosphoproteome in a refined SCX-based approach.</title>
        <authorList>
            <person name="Gauci S."/>
            <person name="Helbig A.O."/>
            <person name="Slijper M."/>
            <person name="Krijgsveld J."/>
            <person name="Heck A.J."/>
            <person name="Mohammed S."/>
        </authorList>
    </citation>
    <scope>IDENTIFICATION BY MASS SPECTROMETRY [LARGE SCALE ANALYSIS]</scope>
</reference>
<reference key="12">
    <citation type="journal article" date="2009" name="Sci. Signal.">
        <title>Quantitative phosphoproteomic analysis of T cell receptor signaling reveals system-wide modulation of protein-protein interactions.</title>
        <authorList>
            <person name="Mayya V."/>
            <person name="Lundgren D.H."/>
            <person name="Hwang S.-I."/>
            <person name="Rezaul K."/>
            <person name="Wu L."/>
            <person name="Eng J.K."/>
            <person name="Rodionov V."/>
            <person name="Han D.K."/>
        </authorList>
    </citation>
    <scope>PHOSPHORYLATION [LARGE SCALE ANALYSIS] AT SER-425</scope>
    <scope>IDENTIFICATION BY MASS SPECTROMETRY [LARGE SCALE ANALYSIS]</scope>
    <source>
        <tissue>Leukemic T-cell</tissue>
    </source>
</reference>
<reference key="13">
    <citation type="journal article" date="2010" name="Sci. Signal.">
        <title>Quantitative phosphoproteomics reveals widespread full phosphorylation site occupancy during mitosis.</title>
        <authorList>
            <person name="Olsen J.V."/>
            <person name="Vermeulen M."/>
            <person name="Santamaria A."/>
            <person name="Kumar C."/>
            <person name="Miller M.L."/>
            <person name="Jensen L.J."/>
            <person name="Gnad F."/>
            <person name="Cox J."/>
            <person name="Jensen T.S."/>
            <person name="Nigg E.A."/>
            <person name="Brunak S."/>
            <person name="Mann M."/>
        </authorList>
    </citation>
    <scope>PHOSPHORYLATION [LARGE SCALE ANALYSIS] AT SER-425; SER-427; SER-596 AND THR-599</scope>
    <scope>IDENTIFICATION BY MASS SPECTROMETRY [LARGE SCALE ANALYSIS]</scope>
    <source>
        <tissue>Cervix carcinoma</tissue>
    </source>
</reference>
<reference key="14">
    <citation type="journal article" date="2011" name="BMC Syst. Biol.">
        <title>Initial characterization of the human central proteome.</title>
        <authorList>
            <person name="Burkard T.R."/>
            <person name="Planyavsky M."/>
            <person name="Kaupe I."/>
            <person name="Breitwieser F.P."/>
            <person name="Buerckstuemmer T."/>
            <person name="Bennett K.L."/>
            <person name="Superti-Furga G."/>
            <person name="Colinge J."/>
        </authorList>
    </citation>
    <scope>IDENTIFICATION BY MASS SPECTROMETRY [LARGE SCALE ANALYSIS]</scope>
</reference>
<reference key="15">
    <citation type="journal article" date="2011" name="Sci. Signal.">
        <title>System-wide temporal characterization of the proteome and phosphoproteome of human embryonic stem cell differentiation.</title>
        <authorList>
            <person name="Rigbolt K.T."/>
            <person name="Prokhorova T.A."/>
            <person name="Akimov V."/>
            <person name="Henningsen J."/>
            <person name="Johansen P.T."/>
            <person name="Kratchmarova I."/>
            <person name="Kassem M."/>
            <person name="Mann M."/>
            <person name="Olsen J.V."/>
            <person name="Blagoev B."/>
        </authorList>
    </citation>
    <scope>PHOSPHORYLATION [LARGE SCALE ANALYSIS] AT SER-425; SER-427; SER-596 AND THR-599</scope>
    <scope>IDENTIFICATION BY MASS SPECTROMETRY [LARGE SCALE ANALYSIS]</scope>
</reference>
<reference key="16">
    <citation type="journal article" date="2012" name="Proc. Natl. Acad. Sci. U.S.A.">
        <title>N-terminal acetylome analyses and functional insights of the N-terminal acetyltransferase NatB.</title>
        <authorList>
            <person name="Van Damme P."/>
            <person name="Lasa M."/>
            <person name="Polevoda B."/>
            <person name="Gazquez C."/>
            <person name="Elosegui-Artola A."/>
            <person name="Kim D.S."/>
            <person name="De Juan-Pardo E."/>
            <person name="Demeyer K."/>
            <person name="Hole K."/>
            <person name="Larrea E."/>
            <person name="Timmerman E."/>
            <person name="Prieto J."/>
            <person name="Arnesen T."/>
            <person name="Sherman F."/>
            <person name="Gevaert K."/>
            <person name="Aldabe R."/>
        </authorList>
    </citation>
    <scope>ACETYLATION [LARGE SCALE ANALYSIS] AT MET-1</scope>
    <scope>IDENTIFICATION BY MASS SPECTROMETRY [LARGE SCALE ANALYSIS]</scope>
</reference>
<reference key="17">
    <citation type="journal article" date="2013" name="J. Proteome Res.">
        <title>Toward a comprehensive characterization of a human cancer cell phosphoproteome.</title>
        <authorList>
            <person name="Zhou H."/>
            <person name="Di Palma S."/>
            <person name="Preisinger C."/>
            <person name="Peng M."/>
            <person name="Polat A.N."/>
            <person name="Heck A.J."/>
            <person name="Mohammed S."/>
        </authorList>
    </citation>
    <scope>PHOSPHORYLATION [LARGE SCALE ANALYSIS] AT SER-402; SER-492; SER-525; SER-596; THR-599; SER-640 AND SER-641</scope>
    <scope>IDENTIFICATION BY MASS SPECTROMETRY [LARGE SCALE ANALYSIS]</scope>
    <source>
        <tissue>Cervix carcinoma</tissue>
        <tissue>Erythroleukemia</tissue>
    </source>
</reference>
<reference key="18">
    <citation type="journal article" date="2014" name="J. Proteomics">
        <title>An enzyme assisted RP-RPLC approach for in-depth analysis of human liver phosphoproteome.</title>
        <authorList>
            <person name="Bian Y."/>
            <person name="Song C."/>
            <person name="Cheng K."/>
            <person name="Dong M."/>
            <person name="Wang F."/>
            <person name="Huang J."/>
            <person name="Sun D."/>
            <person name="Wang L."/>
            <person name="Ye M."/>
            <person name="Zou H."/>
        </authorList>
    </citation>
    <scope>PHOSPHORYLATION [LARGE SCALE ANALYSIS] AT SER-596 AND THR-599</scope>
    <scope>IDENTIFICATION BY MASS SPECTROMETRY [LARGE SCALE ANALYSIS]</scope>
    <source>
        <tissue>Liver</tissue>
    </source>
</reference>
<accession>Q3YEC7</accession>
<accession>A8QVZ7</accession>
<accession>A8QVZ8</accession>
<accession>C6K8I4</accession>
<accession>C6K8I5</accession>
<accession>Q4F968</accession>
<accession>Q5T5R7</accession>
<accession>Q8IWK1</accession>
<accession>Q8TCL4</accession>
<accession>Q8WU94</accession>
<accession>Q96SR8</accession>
<accession>Q9BU21</accession>
<accession>Q9H935</accession>
<comment type="function">
    <text evidence="6">May enhance cellular proliferation. May reduce growth inhibitory activity of CDKN2A.</text>
</comment>
<comment type="interaction">
    <interactant intactId="EBI-742029">
        <id>Q3YEC7</id>
    </interactant>
    <interactant intactId="EBI-724076">
        <id>Q99750</id>
        <label>MDFI</label>
    </interactant>
    <organismsDiffer>false</organismsDiffer>
    <experiments>2</experiments>
</comment>
<comment type="interaction">
    <interactant intactId="EBI-742029">
        <id>Q3YEC7</id>
    </interactant>
    <interactant intactId="EBI-1182445">
        <id>P58062</id>
        <label>SPINK7</label>
    </interactant>
    <organismsDiffer>false</organismsDiffer>
    <experiments>3</experiments>
</comment>
<comment type="interaction">
    <interactant intactId="EBI-25885259">
        <id>Q3YEC7-3</id>
    </interactant>
    <interactant intactId="EBI-399080">
        <id>Q92993</id>
        <label>KAT5</label>
    </interactant>
    <organismsDiffer>false</organismsDiffer>
    <experiments>3</experiments>
</comment>
<comment type="interaction">
    <interactant intactId="EBI-25885259">
        <id>Q3YEC7-3</id>
    </interactant>
    <interactant intactId="EBI-11742507">
        <id>Q8TAP4-4</id>
        <label>LMO3</label>
    </interactant>
    <organismsDiffer>false</organismsDiffer>
    <experiments>3</experiments>
</comment>
<comment type="interaction">
    <interactant intactId="EBI-25885259">
        <id>Q3YEC7-3</id>
    </interactant>
    <interactant intactId="EBI-1383528">
        <id>P17252</id>
        <label>PRKCA</label>
    </interactant>
    <organismsDiffer>false</organismsDiffer>
    <experiments>3</experiments>
</comment>
<comment type="interaction">
    <interactant intactId="EBI-25885259">
        <id>Q3YEC7-3</id>
    </interactant>
    <interactant intactId="EBI-9090795">
        <id>Q15047-2</id>
        <label>SETDB1</label>
    </interactant>
    <organismsDiffer>false</organismsDiffer>
    <experiments>3</experiments>
</comment>
<comment type="interaction">
    <interactant intactId="EBI-25885259">
        <id>Q3YEC7-3</id>
    </interactant>
    <interactant intactId="EBI-359832">
        <id>P61981</id>
        <label>YWHAG</label>
    </interactant>
    <organismsDiffer>false</organismsDiffer>
    <experiments>3</experiments>
</comment>
<comment type="subcellular location">
    <molecule>Isoform 1</molecule>
    <subcellularLocation>
        <location evidence="7">Cytoplasm</location>
    </subcellularLocation>
    <text>Predominantly cytoplasmic (PubMed:17962191).</text>
</comment>
<comment type="subcellular location">
    <molecule>Isoform 3</molecule>
    <subcellularLocation>
        <location evidence="7">Nucleus</location>
    </subcellularLocation>
    <text>Predominantly nuclear (PubMed:17962191).</text>
</comment>
<comment type="alternative products">
    <event type="alternative splicing"/>
    <isoform>
        <id>Q3YEC7-1</id>
        <name>1</name>
        <name>RBEL1A</name>
        <sequence type="displayed"/>
    </isoform>
    <isoform>
        <id>Q3YEC7-2</id>
        <name>2</name>
        <sequence type="described" ref="VSP_022646"/>
    </isoform>
    <isoform>
        <id>Q3YEC7-3</id>
        <name>3</name>
        <name>RBEL1B</name>
        <sequence type="described" ref="VSP_022649"/>
    </isoform>
    <isoform>
        <id>Q3YEC7-4</id>
        <name>4</name>
        <name>RBEL1D</name>
        <sequence type="described" ref="VSP_022647 VSP_022648"/>
    </isoform>
    <isoform>
        <id>Q3YEC7-5</id>
        <name>5</name>
        <sequence type="described" ref="VSP_022646 VSP_022647 VSP_022648"/>
    </isoform>
    <isoform>
        <id>Q3YEC7-6</id>
        <name>6</name>
        <name>RBEL1C</name>
        <sequence type="described" ref="VSP_042559 VSP_042560"/>
    </isoform>
</comment>
<comment type="PTM">
    <text evidence="7">Isoform 1 is O-glycosylated, while other isoforms are not.</text>
</comment>
<comment type="miscellaneous">
    <molecule>Isoform 1</molecule>
    <text>Predominant isoform. Overexpressed in about 67% of primary breast tumors.</text>
</comment>
<comment type="similarity">
    <text evidence="13">Belongs to the small GTPase superfamily. Rab family.</text>
</comment>
<comment type="sequence caution" evidence="13">
    <conflict type="erroneous initiation">
        <sequence resource="EMBL-CDS" id="AAH02945"/>
    </conflict>
    <text>Truncated N-terminus.</text>
</comment>
<comment type="sequence caution" evidence="13">
    <conflict type="erroneous initiation">
        <sequence resource="EMBL-CDS" id="AAH21095"/>
    </conflict>
    <text>Truncated N-terminus.</text>
</comment>
<comment type="sequence caution" evidence="13">
    <conflict type="erroneous initiation">
        <sequence resource="EMBL-CDS" id="AAH35786"/>
    </conflict>
    <text>Truncated N-terminus.</text>
</comment>
<comment type="sequence caution" evidence="13">
    <conflict type="erroneous initiation">
        <sequence resource="EMBL-CDS" id="BAB14408"/>
    </conflict>
    <text>Truncated N-terminus.</text>
</comment>
<comment type="sequence caution" evidence="13">
    <conflict type="erroneous initiation">
        <sequence resource="EMBL-CDS" id="BAB55213"/>
    </conflict>
    <text>Truncated N-terminus.</text>
</comment>
<proteinExistence type="evidence at protein level"/>
<keyword id="KW-0007">Acetylation</keyword>
<keyword id="KW-0025">Alternative splicing</keyword>
<keyword id="KW-0963">Cytoplasm</keyword>
<keyword id="KW-0325">Glycoprotein</keyword>
<keyword id="KW-0342">GTP-binding</keyword>
<keyword id="KW-0547">Nucleotide-binding</keyword>
<keyword id="KW-0539">Nucleus</keyword>
<keyword id="KW-0597">Phosphoprotein</keyword>
<keyword id="KW-1267">Proteomics identification</keyword>
<keyword id="KW-1185">Reference proteome</keyword>
<evidence type="ECO:0000250" key="1">
    <source>
        <dbReference type="UniProtKB" id="Q5U3K5"/>
    </source>
</evidence>
<evidence type="ECO:0000255" key="2"/>
<evidence type="ECO:0000256" key="3">
    <source>
        <dbReference type="SAM" id="MobiDB-lite"/>
    </source>
</evidence>
<evidence type="ECO:0000269" key="4">
    <source>
    </source>
</evidence>
<evidence type="ECO:0000269" key="5">
    <source>
    </source>
</evidence>
<evidence type="ECO:0000269" key="6">
    <source>
    </source>
</evidence>
<evidence type="ECO:0000269" key="7">
    <source>
    </source>
</evidence>
<evidence type="ECO:0000269" key="8">
    <source ref="5"/>
</evidence>
<evidence type="ECO:0000303" key="9">
    <source>
    </source>
</evidence>
<evidence type="ECO:0000303" key="10">
    <source>
    </source>
</evidence>
<evidence type="ECO:0000303" key="11">
    <source>
    </source>
</evidence>
<evidence type="ECO:0000303" key="12">
    <source>
    </source>
</evidence>
<evidence type="ECO:0000305" key="13"/>
<evidence type="ECO:0007744" key="14">
    <source>
    </source>
</evidence>
<evidence type="ECO:0007744" key="15">
    <source>
    </source>
</evidence>
<evidence type="ECO:0007744" key="16">
    <source>
    </source>
</evidence>
<evidence type="ECO:0007744" key="17">
    <source>
    </source>
</evidence>
<evidence type="ECO:0007744" key="18">
    <source>
    </source>
</evidence>
<evidence type="ECO:0007744" key="19">
    <source>
    </source>
</evidence>
<evidence type="ECO:0007744" key="20">
    <source>
    </source>
</evidence>
<evidence type="ECO:0007744" key="21">
    <source>
    </source>
</evidence>
<feature type="chain" id="PRO_0000274223" description="Rab-like protein 6">
    <location>
        <begin position="1"/>
        <end position="729"/>
    </location>
</feature>
<feature type="region of interest" description="Small GTPase-like">
    <location>
        <begin position="39"/>
        <end position="279"/>
    </location>
</feature>
<feature type="region of interest" description="Disordered" evidence="3">
    <location>
        <begin position="281"/>
        <end position="729"/>
    </location>
</feature>
<feature type="region of interest" description="Interaction with CDKN2A" evidence="6">
    <location>
        <begin position="655"/>
        <end position="693"/>
    </location>
</feature>
<feature type="compositionally biased region" description="Low complexity" evidence="3">
    <location>
        <begin position="290"/>
        <end position="315"/>
    </location>
</feature>
<feature type="compositionally biased region" description="Pro residues" evidence="3">
    <location>
        <begin position="331"/>
        <end position="351"/>
    </location>
</feature>
<feature type="compositionally biased region" description="Basic and acidic residues" evidence="3">
    <location>
        <begin position="395"/>
        <end position="416"/>
    </location>
</feature>
<feature type="compositionally biased region" description="Polar residues" evidence="3">
    <location>
        <begin position="489"/>
        <end position="502"/>
    </location>
</feature>
<feature type="compositionally biased region" description="Basic and acidic residues" evidence="3">
    <location>
        <begin position="581"/>
        <end position="595"/>
    </location>
</feature>
<feature type="compositionally biased region" description="Acidic residues" evidence="3">
    <location>
        <begin position="596"/>
        <end position="605"/>
    </location>
</feature>
<feature type="compositionally biased region" description="Pro residues" evidence="3">
    <location>
        <begin position="606"/>
        <end position="615"/>
    </location>
</feature>
<feature type="compositionally biased region" description="Basic and acidic residues" evidence="3">
    <location>
        <begin position="635"/>
        <end position="652"/>
    </location>
</feature>
<feature type="compositionally biased region" description="Basic residues" evidence="3">
    <location>
        <begin position="669"/>
        <end position="678"/>
    </location>
</feature>
<feature type="compositionally biased region" description="Basic and acidic residues" evidence="3">
    <location>
        <begin position="679"/>
        <end position="689"/>
    </location>
</feature>
<feature type="compositionally biased region" description="Gly residues" evidence="3">
    <location>
        <begin position="711"/>
        <end position="729"/>
    </location>
</feature>
<feature type="binding site" evidence="2">
    <location>
        <begin position="50"/>
        <end position="57"/>
    </location>
    <ligand>
        <name>GTP</name>
        <dbReference type="ChEBI" id="CHEBI:37565"/>
    </ligand>
</feature>
<feature type="binding site" evidence="2">
    <location>
        <begin position="100"/>
        <end position="104"/>
    </location>
    <ligand>
        <name>GTP</name>
        <dbReference type="ChEBI" id="CHEBI:37565"/>
    </ligand>
</feature>
<feature type="binding site" evidence="2">
    <location>
        <begin position="177"/>
        <end position="179"/>
    </location>
    <ligand>
        <name>GTP</name>
        <dbReference type="ChEBI" id="CHEBI:37565"/>
    </ligand>
</feature>
<feature type="modified residue" description="N-acetylmethionine" evidence="19">
    <location>
        <position position="1"/>
    </location>
</feature>
<feature type="modified residue" description="Phosphoserine" evidence="15 20">
    <location>
        <position position="402"/>
    </location>
</feature>
<feature type="modified residue" description="Phosphoserine" evidence="16 17 18">
    <location>
        <position position="425"/>
    </location>
</feature>
<feature type="modified residue" description="Phosphoserine" evidence="17 18">
    <location>
        <position position="427"/>
    </location>
</feature>
<feature type="modified residue" description="Phosphoserine" evidence="1">
    <location>
        <position position="470"/>
    </location>
</feature>
<feature type="modified residue" description="Phosphoserine" evidence="1">
    <location>
        <position position="471"/>
    </location>
</feature>
<feature type="modified residue" description="Phosphoserine" evidence="20">
    <location>
        <position position="492"/>
    </location>
</feature>
<feature type="modified residue" description="Phosphoserine" evidence="20">
    <location>
        <position position="525"/>
    </location>
</feature>
<feature type="modified residue" description="Phosphoserine" evidence="14">
    <location>
        <position position="577"/>
    </location>
</feature>
<feature type="modified residue" description="Phosphoserine" evidence="14 17 18 20 21">
    <location>
        <position position="596"/>
    </location>
</feature>
<feature type="modified residue" description="Phosphothreonine" evidence="14 17 18 20 21">
    <location>
        <position position="599"/>
    </location>
</feature>
<feature type="modified residue" description="Phosphoserine" evidence="20">
    <location>
        <position position="640"/>
    </location>
</feature>
<feature type="modified residue" description="Phosphoserine" evidence="20">
    <location>
        <position position="641"/>
    </location>
</feature>
<feature type="splice variant" id="VSP_022646" description="In isoform 2 and isoform 5." evidence="9 10">
    <original>D</original>
    <variation>DS</variation>
    <location>
        <position position="199"/>
    </location>
</feature>
<feature type="splice variant" id="VSP_042559" description="In isoform 6." evidence="12">
    <original>RETLLRQLETNQLDMDATLEELSVQQETEDQNYGIFLEMMEARSRGHASPLAANGQSPSPGSQSPVV</original>
    <variation>KDVRLAQERGCAVVLVSEEVRMPAGWDCCWGRLGWKEGGSQTCPVPALLGRPLLPAEPSPHHWVDYSLESSPLLSCSIP</variation>
    <location>
        <begin position="236"/>
        <end position="302"/>
    </location>
</feature>
<feature type="splice variant" id="VSP_022647" description="In isoform 4 and isoform 5." evidence="9 12">
    <original>RETLLRQLETNQLDMDATLEELSVQQETE</original>
    <variation>VSTHHVGWSGCWSLTSFQVSPV</variation>
    <location>
        <begin position="236"/>
        <end position="264"/>
    </location>
</feature>
<feature type="splice variant" id="VSP_022648" description="In isoform 4 and isoform 5." evidence="9 12">
    <location>
        <begin position="265"/>
        <end position="729"/>
    </location>
</feature>
<feature type="splice variant" id="VSP_042560" description="In isoform 6." evidence="12">
    <location>
        <begin position="303"/>
        <end position="729"/>
    </location>
</feature>
<feature type="splice variant" id="VSP_022649" description="In isoform 3." evidence="10 11">
    <original>LFGTSPATEAAPPPPEPVPAAEGPATVQSVEDFVPDDRLDRSFLEDTTPARDEKKVGAKAAQQDSDSDGEALGGNPMVAGFQDDVDLEDQPRGSPPLPAGPVPSQDITLSSEEEAEVAAPTKGPAPAPQQCSEPETKWSSIPASKPRRGTAPTRTAAPPWPGGVSVRTGPEKRSSTRPPAEMEPGKGEQASSSESDPEGPIAAQMLSFVMDDPDFESEGSDTQRRADDFPVRDDPSDVTDEDEGPAEPPPPPKLPLPAFRLKNDSDLFGLGLEEAGPKESSEEGKEGKTPSKEKKKKKKKGKEEEEKAAKKKSKHKKSKDKEEGKEERRRRQQRPPRSRERTAADELEAFLGGGAPGGRHPGGGDYEEL</original>
    <variation>PPPWGWRLRGALGRRGQWPPWGGGRACHCLGRHLPLYHRLCRCPVAAVCASELEEAGHWWSPGWALQVLGLQAQCEPALQEGRGQLASARLGGHPGPLGAEPPVFLRDVTEAQEGPVRVCLQRLGRGRLAVGCALPRHLLALRAHLGPQHAYGSASGREP</variation>
    <location>
        <begin position="361"/>
        <end position="729"/>
    </location>
</feature>
<feature type="sequence variant" id="VAR_030210" description="In dbSNP:rs2811741." evidence="4 5 6 8">
    <original>E</original>
    <variation>Q</variation>
    <location>
        <position position="382"/>
    </location>
</feature>
<feature type="sequence conflict" description="In Ref. 7; BAB14408." evidence="13" ref="7">
    <original>Y</original>
    <variation>C</variation>
    <location>
        <position position="137"/>
    </location>
</feature>